<evidence type="ECO:0000255" key="1"/>
<evidence type="ECO:0000256" key="2">
    <source>
        <dbReference type="SAM" id="MobiDB-lite"/>
    </source>
</evidence>
<evidence type="ECO:0000305" key="3"/>
<dbReference type="EMBL" id="AAFI02000107">
    <property type="protein sequence ID" value="EAL63430.1"/>
    <property type="molecule type" value="Genomic_DNA"/>
</dbReference>
<dbReference type="RefSeq" id="XP_636935.1">
    <property type="nucleotide sequence ID" value="XM_631843.1"/>
</dbReference>
<dbReference type="FunCoup" id="Q54JJ6">
    <property type="interactions" value="26"/>
</dbReference>
<dbReference type="STRING" id="44689.Q54JJ6"/>
<dbReference type="GlyGen" id="Q54JJ6">
    <property type="glycosylation" value="1 site"/>
</dbReference>
<dbReference type="PaxDb" id="44689-DDB0302517"/>
<dbReference type="EnsemblProtists" id="EAL63430">
    <property type="protein sequence ID" value="EAL63430"/>
    <property type="gene ID" value="DDB_G0288009"/>
</dbReference>
<dbReference type="GeneID" id="8626410"/>
<dbReference type="KEGG" id="ddi:DDB_G0288009"/>
<dbReference type="dictyBase" id="DDB_G0288009"/>
<dbReference type="VEuPathDB" id="AmoebaDB:DDB_G0288009"/>
<dbReference type="eggNOG" id="KOG2226">
    <property type="taxonomic scope" value="Eukaryota"/>
</dbReference>
<dbReference type="HOGENOM" id="CLU_007392_1_0_1"/>
<dbReference type="InParanoid" id="Q54JJ6"/>
<dbReference type="OMA" id="IFEDDKW"/>
<dbReference type="PhylomeDB" id="Q54JJ6"/>
<dbReference type="PRO" id="PR:Q54JJ6"/>
<dbReference type="Proteomes" id="UP000002195">
    <property type="component" value="Chromosome 5"/>
</dbReference>
<dbReference type="GO" id="GO:0005797">
    <property type="term" value="C:Golgi medial cisterna"/>
    <property type="evidence" value="ECO:0000318"/>
    <property type="project" value="GO_Central"/>
</dbReference>
<dbReference type="GO" id="GO:0000138">
    <property type="term" value="C:Golgi trans cisterna"/>
    <property type="evidence" value="ECO:0000318"/>
    <property type="project" value="GO_Central"/>
</dbReference>
<dbReference type="GO" id="GO:0016020">
    <property type="term" value="C:membrane"/>
    <property type="evidence" value="ECO:0000318"/>
    <property type="project" value="GO_Central"/>
</dbReference>
<dbReference type="InterPro" id="IPR026705">
    <property type="entry name" value="Hid-1/Ecm30"/>
</dbReference>
<dbReference type="PANTHER" id="PTHR21575">
    <property type="entry name" value="PROTEIN HID1"/>
    <property type="match status" value="1"/>
</dbReference>
<dbReference type="PANTHER" id="PTHR21575:SF12">
    <property type="entry name" value="PROTEIN HID1"/>
    <property type="match status" value="1"/>
</dbReference>
<dbReference type="Pfam" id="PF09742">
    <property type="entry name" value="Dymeclin"/>
    <property type="match status" value="1"/>
</dbReference>
<reference key="1">
    <citation type="journal article" date="2005" name="Nature">
        <title>The genome of the social amoeba Dictyostelium discoideum.</title>
        <authorList>
            <person name="Eichinger L."/>
            <person name="Pachebat J.A."/>
            <person name="Gloeckner G."/>
            <person name="Rajandream M.A."/>
            <person name="Sucgang R."/>
            <person name="Berriman M."/>
            <person name="Song J."/>
            <person name="Olsen R."/>
            <person name="Szafranski K."/>
            <person name="Xu Q."/>
            <person name="Tunggal B."/>
            <person name="Kummerfeld S."/>
            <person name="Madera M."/>
            <person name="Konfortov B.A."/>
            <person name="Rivero F."/>
            <person name="Bankier A.T."/>
            <person name="Lehmann R."/>
            <person name="Hamlin N."/>
            <person name="Davies R."/>
            <person name="Gaudet P."/>
            <person name="Fey P."/>
            <person name="Pilcher K."/>
            <person name="Chen G."/>
            <person name="Saunders D."/>
            <person name="Sodergren E.J."/>
            <person name="Davis P."/>
            <person name="Kerhornou A."/>
            <person name="Nie X."/>
            <person name="Hall N."/>
            <person name="Anjard C."/>
            <person name="Hemphill L."/>
            <person name="Bason N."/>
            <person name="Farbrother P."/>
            <person name="Desany B."/>
            <person name="Just E."/>
            <person name="Morio T."/>
            <person name="Rost R."/>
            <person name="Churcher C.M."/>
            <person name="Cooper J."/>
            <person name="Haydock S."/>
            <person name="van Driessche N."/>
            <person name="Cronin A."/>
            <person name="Goodhead I."/>
            <person name="Muzny D.M."/>
            <person name="Mourier T."/>
            <person name="Pain A."/>
            <person name="Lu M."/>
            <person name="Harper D."/>
            <person name="Lindsay R."/>
            <person name="Hauser H."/>
            <person name="James K.D."/>
            <person name="Quiles M."/>
            <person name="Madan Babu M."/>
            <person name="Saito T."/>
            <person name="Buchrieser C."/>
            <person name="Wardroper A."/>
            <person name="Felder M."/>
            <person name="Thangavelu M."/>
            <person name="Johnson D."/>
            <person name="Knights A."/>
            <person name="Loulseged H."/>
            <person name="Mungall K.L."/>
            <person name="Oliver K."/>
            <person name="Price C."/>
            <person name="Quail M.A."/>
            <person name="Urushihara H."/>
            <person name="Hernandez J."/>
            <person name="Rabbinowitsch E."/>
            <person name="Steffen D."/>
            <person name="Sanders M."/>
            <person name="Ma J."/>
            <person name="Kohara Y."/>
            <person name="Sharp S."/>
            <person name="Simmonds M.N."/>
            <person name="Spiegler S."/>
            <person name="Tivey A."/>
            <person name="Sugano S."/>
            <person name="White B."/>
            <person name="Walker D."/>
            <person name="Woodward J.R."/>
            <person name="Winckler T."/>
            <person name="Tanaka Y."/>
            <person name="Shaulsky G."/>
            <person name="Schleicher M."/>
            <person name="Weinstock G.M."/>
            <person name="Rosenthal A."/>
            <person name="Cox E.C."/>
            <person name="Chisholm R.L."/>
            <person name="Gibbs R.A."/>
            <person name="Loomis W.F."/>
            <person name="Platzer M."/>
            <person name="Kay R.R."/>
            <person name="Williams J.G."/>
            <person name="Dear P.H."/>
            <person name="Noegel A.A."/>
            <person name="Barrell B.G."/>
            <person name="Kuspa A."/>
        </authorList>
    </citation>
    <scope>NUCLEOTIDE SEQUENCE [LARGE SCALE GENOMIC DNA]</scope>
    <source>
        <strain>AX4</strain>
    </source>
</reference>
<sequence>MGTGSSREQHLNSFNTLQKETVPFSSDLWKTILSQNLEDDSLYLENLKKLKNERPENLATFIKKLVNQLVLVKGLQRETNTPGDFQLTSISLSYLSRILPIVFESGDDFADKVFWLNEGIEPLSHPSAKISTPPSITTTKTTEIIEEQEKKDQENKQVEENKENEEKKDEEKKDEEKKDEEKKDEDKKENKTTTTTTTTNTTNNTNNNNNSDESSFDTTPLAVKLMDSLLDLLFFPGFTVTESLGLKSPKEASPDAIPVLFSWAGGFGVDSVPTVHNKQFWINRLSVLQCLITCLSEQLYVPQDSVSTFKSKWLDWITHTQEYYTEALLFSLINTFATFDPIGWGIPYNHLMYSDDHEICSKLSIQILNVLLTYDPIENNDQQPQQQHHHHQQQHHQQQQQQQQSTIECRNKFIQYIKTLKRVRDFKFFFNAFERIMNVPLIASHTKLPNSTKKIELHQDLTYTMWLFLSYNHDFLRSIVNYENSPEFLIPLLQYMDEGRKSQTTHGIVQIGTFILLLLSGERDFSISLNKPFVGRIHIDIQQPQVYSDFVITVMYRLLVDTPDRLESIYECVLTILSNLSPYMKNLSMVTCVKLMKLFEYLSTPRFLFATNHNYRYVGFLLESLNNLLQHQYESNTRLIYAILRCQNQFSKLAYLKISPVTPSKPMEQITQPSPISTSEEAFGKLNKLSISEEPSTLSNEKSDKTTDGGDHQDESISKSKVQSKPTTEHPNSTGATPSSTNSGTPTIKAFSSTTPNQESPKLGGDGIDSQSSTPNKQQLPPPPPQQTKKTQMVSHFMPTDEWLQDIKKQLPLDNILKVITHLSPQIQGLCTGSGSDEQKIMDYLKMSTIVGIFHNPGPIMTRRYHSNAITKSWFIAYMWCIIYLENHSPPLFLHTNIKLFQVKQ</sequence>
<name>HID1_DICDI</name>
<gene>
    <name type="primary">hid1</name>
    <name type="ORF">DDB_G0288009</name>
</gene>
<comment type="similarity">
    <text evidence="3">Belongs to the hid-1 family.</text>
</comment>
<protein>
    <recommendedName>
        <fullName>Protein HID1</fullName>
    </recommendedName>
    <alternativeName>
        <fullName>HID1 domain-containing protein</fullName>
    </alternativeName>
    <alternativeName>
        <fullName>Protein hid-1 homolog</fullName>
    </alternativeName>
</protein>
<feature type="chain" id="PRO_0000356847" description="Protein HID1">
    <location>
        <begin position="1"/>
        <end position="905"/>
    </location>
</feature>
<feature type="region of interest" description="Disordered" evidence="2">
    <location>
        <begin position="147"/>
        <end position="217"/>
    </location>
</feature>
<feature type="region of interest" description="Disordered" evidence="2">
    <location>
        <begin position="381"/>
        <end position="404"/>
    </location>
</feature>
<feature type="region of interest" description="Disordered" evidence="2">
    <location>
        <begin position="690"/>
        <end position="793"/>
    </location>
</feature>
<feature type="coiled-coil region" evidence="1">
    <location>
        <begin position="139"/>
        <end position="191"/>
    </location>
</feature>
<feature type="compositionally biased region" description="Basic and acidic residues" evidence="2">
    <location>
        <begin position="147"/>
        <end position="191"/>
    </location>
</feature>
<feature type="compositionally biased region" description="Low complexity" evidence="2">
    <location>
        <begin position="192"/>
        <end position="210"/>
    </location>
</feature>
<feature type="compositionally biased region" description="Low complexity" evidence="2">
    <location>
        <begin position="395"/>
        <end position="404"/>
    </location>
</feature>
<feature type="compositionally biased region" description="Polar residues" evidence="2">
    <location>
        <begin position="690"/>
        <end position="700"/>
    </location>
</feature>
<feature type="compositionally biased region" description="Basic and acidic residues" evidence="2">
    <location>
        <begin position="701"/>
        <end position="718"/>
    </location>
</feature>
<feature type="compositionally biased region" description="Polar residues" evidence="2">
    <location>
        <begin position="719"/>
        <end position="760"/>
    </location>
</feature>
<keyword id="KW-0175">Coiled coil</keyword>
<keyword id="KW-1185">Reference proteome</keyword>
<accession>Q54JJ6</accession>
<proteinExistence type="inferred from homology"/>
<organism>
    <name type="scientific">Dictyostelium discoideum</name>
    <name type="common">Social amoeba</name>
    <dbReference type="NCBI Taxonomy" id="44689"/>
    <lineage>
        <taxon>Eukaryota</taxon>
        <taxon>Amoebozoa</taxon>
        <taxon>Evosea</taxon>
        <taxon>Eumycetozoa</taxon>
        <taxon>Dictyostelia</taxon>
        <taxon>Dictyosteliales</taxon>
        <taxon>Dictyosteliaceae</taxon>
        <taxon>Dictyostelium</taxon>
    </lineage>
</organism>